<comment type="function">
    <text evidence="2">Toxin that causes irreversible contractile paralysis into adult Aedes aegypti resulting in 100% mortality after 24 hours.</text>
</comment>
<comment type="subcellular location">
    <subcellularLocation>
        <location evidence="6">Secreted</location>
    </subcellularLocation>
</comment>
<comment type="tissue specificity">
    <text evidence="6">Expressed by the venom gland.</text>
</comment>
<comment type="toxic dose">
    <text evidence="2">LD(50) is 45.4 +- 3.8 pmol/g when injected into A.aegypti.</text>
</comment>
<comment type="miscellaneous">
    <text>The primary structure of the mature peptide is identical to that of U1-theraphotoxin-Lp1a (Lasiotoxin-1) from Lasiodora parahybana (AC P0CC18) and U-theraphotoxin-Lk2a from Lasiodora klugi (AC P0DRD8).</text>
</comment>
<comment type="similarity">
    <text evidence="5">Belongs to the neurotoxin 12 (Hwtx-2) family. 04 (lasiotoxin) subfamily.</text>
</comment>
<organism>
    <name type="scientific">Lasiodora sp. (strain IBSP 8539)</name>
    <name type="common">Brazilian salmon pink birdeater</name>
    <name type="synonym">Brazilian salmon pink tarantula</name>
    <dbReference type="NCBI Taxonomy" id="300858"/>
    <lineage>
        <taxon>Eukaryota</taxon>
        <taxon>Metazoa</taxon>
        <taxon>Ecdysozoa</taxon>
        <taxon>Arthropoda</taxon>
        <taxon>Chelicerata</taxon>
        <taxon>Arachnida</taxon>
        <taxon>Araneae</taxon>
        <taxon>Mygalomorphae</taxon>
        <taxon>Theraphosidae</taxon>
        <taxon>Lasiodora</taxon>
    </lineage>
</organism>
<reference key="1">
    <citation type="journal article" date="2004" name="Toxicon">
        <title>Molecular cloning of toxins expressed by the venom gland of Lasiodora sp.</title>
        <authorList>
            <person name="Vieira A.L.G."/>
            <person name="Moura M.B."/>
            <person name="Baba E.H."/>
            <person name="Chavez-Olortegui C."/>
            <person name="Kalapothakis E."/>
            <person name="Castro I.M."/>
        </authorList>
    </citation>
    <scope>NUCLEOTIDE SEQUENCE [MRNA]</scope>
    <source>
        <tissue>Venom gland</tissue>
    </source>
</reference>
<sequence length="99" mass="11096">MRSLTLAALLLCSLLLVFHTSAAAELEAQEGHLMIPGDTDTALETVDDERFFECTFECDIKKEGKPCKPKGCKCKDKDNKDHKKCSGGWRCKLKLCLKF</sequence>
<name>TXL1_LASSB</name>
<proteinExistence type="inferred from homology"/>
<accession>P0CC19</accession>
<accession>P61505</accession>
<accession>Q5Q115</accession>
<dbReference type="EMBL" id="AY794219">
    <property type="protein sequence ID" value="AAV68326.1"/>
    <property type="molecule type" value="mRNA"/>
</dbReference>
<dbReference type="SMR" id="P0CC19"/>
<dbReference type="ArachnoServer" id="AS000669">
    <property type="toxin name" value="U1-theraphotoxin-Lsp1a"/>
</dbReference>
<dbReference type="GO" id="GO:0005576">
    <property type="term" value="C:extracellular region"/>
    <property type="evidence" value="ECO:0007669"/>
    <property type="project" value="UniProtKB-SubCell"/>
</dbReference>
<dbReference type="GO" id="GO:0090729">
    <property type="term" value="F:toxin activity"/>
    <property type="evidence" value="ECO:0007669"/>
    <property type="project" value="UniProtKB-KW"/>
</dbReference>
<dbReference type="InterPro" id="IPR012625">
    <property type="entry name" value="Hwtx-2-like"/>
</dbReference>
<dbReference type="Pfam" id="PF08089">
    <property type="entry name" value="Toxin_20"/>
    <property type="match status" value="1"/>
</dbReference>
<dbReference type="SUPFAM" id="SSF57059">
    <property type="entry name" value="omega toxin-like"/>
    <property type="match status" value="1"/>
</dbReference>
<dbReference type="PROSITE" id="PS60022">
    <property type="entry name" value="HWTX_2"/>
    <property type="match status" value="1"/>
</dbReference>
<evidence type="ECO:0000250" key="1"/>
<evidence type="ECO:0000250" key="2">
    <source>
        <dbReference type="UniProtKB" id="P0DRD8"/>
    </source>
</evidence>
<evidence type="ECO:0000255" key="3"/>
<evidence type="ECO:0000303" key="4">
    <source>
    </source>
</evidence>
<evidence type="ECO:0000305" key="5"/>
<evidence type="ECO:0000305" key="6">
    <source>
    </source>
</evidence>
<keyword id="KW-1015">Disulfide bond</keyword>
<keyword id="KW-0528">Neurotoxin</keyword>
<keyword id="KW-0964">Secreted</keyword>
<keyword id="KW-0732">Signal</keyword>
<keyword id="KW-0800">Toxin</keyword>
<feature type="signal peptide" evidence="3">
    <location>
        <begin position="1"/>
        <end position="23"/>
    </location>
</feature>
<feature type="propeptide" id="PRO_0000287432" evidence="1">
    <location>
        <begin position="24"/>
        <end position="50"/>
    </location>
</feature>
<feature type="chain" id="PRO_0000390928" description="U1-theraphotoxin-Lsp1a">
    <location>
        <begin position="51"/>
        <end position="99"/>
    </location>
</feature>
<feature type="disulfide bond" evidence="1">
    <location>
        <begin position="54"/>
        <end position="67"/>
    </location>
</feature>
<feature type="disulfide bond" evidence="1">
    <location>
        <begin position="58"/>
        <end position="91"/>
    </location>
</feature>
<feature type="disulfide bond" evidence="5">
    <location>
        <begin position="72"/>
        <end position="74"/>
    </location>
</feature>
<feature type="disulfide bond" evidence="1">
    <location>
        <begin position="85"/>
        <end position="96"/>
    </location>
</feature>
<protein>
    <recommendedName>
        <fullName evidence="5">U1-theraphotoxin-Lsp1a</fullName>
        <shortName evidence="5">U1-TRTX-Lsp1a</shortName>
    </recommendedName>
    <alternativeName>
        <fullName evidence="4">LTx1</fullName>
    </alternativeName>
</protein>